<evidence type="ECO:0000250" key="1">
    <source>
        <dbReference type="UniProtKB" id="Q9E2H5"/>
    </source>
</evidence>
<evidence type="ECO:0000255" key="2"/>
<evidence type="ECO:0000256" key="3">
    <source>
        <dbReference type="SAM" id="MobiDB-lite"/>
    </source>
</evidence>
<evidence type="ECO:0000305" key="4"/>
<sequence>MATVHYSRRPGTPPVTLTSSPSMDDVATPIPYLPTYAEAVADAPPPYRSRESLVFSPPLFPHVENGTTQQSYDCLDCAYDGIHRLQLAFLRIRKCCVPAFLILFGILTLTAVVVAIVAVFPEEPPNSTT</sequence>
<accession>Q6F6K2</accession>
<organismHost>
    <name type="scientific">Homo sapiens</name>
    <name type="common">Human</name>
    <dbReference type="NCBI Taxonomy" id="9606"/>
</organismHost>
<proteinExistence type="inferred from homology"/>
<reference key="1">
    <citation type="journal article" date="1986" name="J. Gen. Virol.">
        <title>The complete DNA sequence of varicella-zoster virus.</title>
        <authorList>
            <person name="Davison A.J."/>
            <person name="Scott J.E."/>
        </authorList>
    </citation>
    <scope>NUCLEOTIDE SEQUENCE [LARGE SCALE GENOMIC DNA]</scope>
</reference>
<organism>
    <name type="scientific">Varicella-zoster virus (strain Dumas)</name>
    <name type="common">HHV-3</name>
    <name type="synonym">Human herpesvirus 3</name>
    <dbReference type="NCBI Taxonomy" id="10338"/>
    <lineage>
        <taxon>Viruses</taxon>
        <taxon>Duplodnaviria</taxon>
        <taxon>Heunggongvirae</taxon>
        <taxon>Peploviricota</taxon>
        <taxon>Herviviricetes</taxon>
        <taxon>Herpesvirales</taxon>
        <taxon>Orthoherpesviridae</taxon>
        <taxon>Alphaherpesvirinae</taxon>
        <taxon>Varicellovirus</taxon>
        <taxon>Varicellovirus humanalpha3</taxon>
        <taxon>Human herpesvirus 3</taxon>
    </lineage>
</organism>
<gene>
    <name type="ORF">ORF0</name>
</gene>
<name>ORF0_VZVD</name>
<feature type="chain" id="PRO_0000339171" description="Membrane protein 0">
    <location>
        <begin position="1"/>
        <end position="129"/>
    </location>
</feature>
<feature type="transmembrane region" description="Helical" evidence="2">
    <location>
        <begin position="100"/>
        <end position="120"/>
    </location>
</feature>
<feature type="region of interest" description="Disordered" evidence="3">
    <location>
        <begin position="1"/>
        <end position="25"/>
    </location>
</feature>
<feature type="short sequence motif" description="PPXY motif" evidence="1">
    <location>
        <begin position="44"/>
        <end position="47"/>
    </location>
</feature>
<dbReference type="EMBL" id="X04370">
    <property type="protein sequence ID" value="CAG46438.1"/>
    <property type="molecule type" value="Genomic_DNA"/>
</dbReference>
<dbReference type="SMR" id="Q6F6K2"/>
<dbReference type="Proteomes" id="UP000002602">
    <property type="component" value="Genome"/>
</dbReference>
<dbReference type="GO" id="GO:0044178">
    <property type="term" value="C:host cell Golgi membrane"/>
    <property type="evidence" value="ECO:0007669"/>
    <property type="project" value="UniProtKB-SubCell"/>
</dbReference>
<dbReference type="GO" id="GO:0016020">
    <property type="term" value="C:membrane"/>
    <property type="evidence" value="ECO:0007669"/>
    <property type="project" value="UniProtKB-KW"/>
</dbReference>
<comment type="subunit">
    <text evidence="1">Interacts with host ITCH; this interaction probably mediates ITCH degradation.</text>
</comment>
<comment type="subcellular location">
    <subcellularLocation>
        <location evidence="1">Host Golgi apparatus membrane</location>
        <topology evidence="4">Single-pass membrane protein</topology>
    </subcellularLocation>
</comment>
<comment type="domain">
    <text evidence="1">Late-budding domains (L domains) are short sequence motifs essential for viral particle budding. They recruit proteins of the host ESCRT machinery (Endosomal Sorting Complex Required for Transport) or ESCRT-associated proteins. Contains one L domain: a PPXY motif which is involved in the interaction with ITCH, a member of the NEDD4 family.</text>
</comment>
<comment type="similarity">
    <text evidence="4">Belongs to the varicellovirus ORF0 protein family.</text>
</comment>
<keyword id="KW-1040">Host Golgi apparatus</keyword>
<keyword id="KW-1043">Host membrane</keyword>
<keyword id="KW-0472">Membrane</keyword>
<keyword id="KW-1185">Reference proteome</keyword>
<keyword id="KW-0812">Transmembrane</keyword>
<keyword id="KW-1133">Transmembrane helix</keyword>
<protein>
    <recommendedName>
        <fullName>Membrane protein 0</fullName>
    </recommendedName>
    <alternativeName>
        <fullName>Membrane ORF0 protein</fullName>
    </alternativeName>
    <alternativeName>
        <fullName>ORF S/L</fullName>
    </alternativeName>
</protein>